<proteinExistence type="inferred from homology"/>
<accession>A8HQP5</accession>
<evidence type="ECO:0000250" key="1"/>
<evidence type="ECO:0000255" key="2">
    <source>
        <dbReference type="HAMAP-Rule" id="MF_01676"/>
    </source>
</evidence>
<dbReference type="EC" id="1.11.1.28" evidence="2"/>
<dbReference type="EMBL" id="AP009384">
    <property type="protein sequence ID" value="BAF87048.1"/>
    <property type="molecule type" value="Genomic_DNA"/>
</dbReference>
<dbReference type="RefSeq" id="WP_012169581.1">
    <property type="nucleotide sequence ID" value="NC_009937.1"/>
</dbReference>
<dbReference type="SMR" id="A8HQP5"/>
<dbReference type="STRING" id="438753.AZC_1050"/>
<dbReference type="KEGG" id="azc:AZC_1050"/>
<dbReference type="eggNOG" id="COG2128">
    <property type="taxonomic scope" value="Bacteria"/>
</dbReference>
<dbReference type="HOGENOM" id="CLU_105328_0_0_5"/>
<dbReference type="BRENDA" id="1.11.1.28">
    <property type="organism ID" value="609"/>
</dbReference>
<dbReference type="Proteomes" id="UP000000270">
    <property type="component" value="Chromosome"/>
</dbReference>
<dbReference type="GO" id="GO:0008785">
    <property type="term" value="F:alkyl hydroperoxide reductase activity"/>
    <property type="evidence" value="ECO:0007669"/>
    <property type="project" value="UniProtKB-UniRule"/>
</dbReference>
<dbReference type="GO" id="GO:0015036">
    <property type="term" value="F:disulfide oxidoreductase activity"/>
    <property type="evidence" value="ECO:0007669"/>
    <property type="project" value="TreeGrafter"/>
</dbReference>
<dbReference type="GO" id="GO:0032843">
    <property type="term" value="F:hydroperoxide reductase activity"/>
    <property type="evidence" value="ECO:0007669"/>
    <property type="project" value="InterPro"/>
</dbReference>
<dbReference type="GO" id="GO:0051920">
    <property type="term" value="F:peroxiredoxin activity"/>
    <property type="evidence" value="ECO:0007669"/>
    <property type="project" value="InterPro"/>
</dbReference>
<dbReference type="GO" id="GO:0045454">
    <property type="term" value="P:cell redox homeostasis"/>
    <property type="evidence" value="ECO:0007669"/>
    <property type="project" value="TreeGrafter"/>
</dbReference>
<dbReference type="GO" id="GO:0006979">
    <property type="term" value="P:response to oxidative stress"/>
    <property type="evidence" value="ECO:0007669"/>
    <property type="project" value="InterPro"/>
</dbReference>
<dbReference type="Gene3D" id="1.20.1290.10">
    <property type="entry name" value="AhpD-like"/>
    <property type="match status" value="1"/>
</dbReference>
<dbReference type="HAMAP" id="MF_01676">
    <property type="entry name" value="AhpD"/>
    <property type="match status" value="1"/>
</dbReference>
<dbReference type="InterPro" id="IPR004674">
    <property type="entry name" value="AhpD"/>
</dbReference>
<dbReference type="InterPro" id="IPR029032">
    <property type="entry name" value="AhpD-like"/>
</dbReference>
<dbReference type="InterPro" id="IPR004675">
    <property type="entry name" value="AhpD_core"/>
</dbReference>
<dbReference type="InterPro" id="IPR003779">
    <property type="entry name" value="CMD-like"/>
</dbReference>
<dbReference type="NCBIfam" id="TIGR00777">
    <property type="entry name" value="ahpD"/>
    <property type="match status" value="1"/>
</dbReference>
<dbReference type="NCBIfam" id="TIGR00778">
    <property type="entry name" value="ahpD_dom"/>
    <property type="match status" value="1"/>
</dbReference>
<dbReference type="PANTHER" id="PTHR33930">
    <property type="entry name" value="ALKYL HYDROPEROXIDE REDUCTASE AHPD"/>
    <property type="match status" value="1"/>
</dbReference>
<dbReference type="PANTHER" id="PTHR33930:SF7">
    <property type="entry name" value="ALKYL HYDROPEROXIDE REDUCTASE AHPD"/>
    <property type="match status" value="1"/>
</dbReference>
<dbReference type="Pfam" id="PF02627">
    <property type="entry name" value="CMD"/>
    <property type="match status" value="1"/>
</dbReference>
<dbReference type="SUPFAM" id="SSF69118">
    <property type="entry name" value="AhpD-like"/>
    <property type="match status" value="1"/>
</dbReference>
<organism>
    <name type="scientific">Azorhizobium caulinodans (strain ATCC 43989 / DSM 5975 / JCM 20966 / LMG 6465 / NBRC 14845 / NCIMB 13405 / ORS 571)</name>
    <dbReference type="NCBI Taxonomy" id="438753"/>
    <lineage>
        <taxon>Bacteria</taxon>
        <taxon>Pseudomonadati</taxon>
        <taxon>Pseudomonadota</taxon>
        <taxon>Alphaproteobacteria</taxon>
        <taxon>Hyphomicrobiales</taxon>
        <taxon>Xanthobacteraceae</taxon>
        <taxon>Azorhizobium</taxon>
    </lineage>
</organism>
<gene>
    <name evidence="2" type="primary">ahpD</name>
    <name type="ordered locus">AZC_1050</name>
</gene>
<protein>
    <recommendedName>
        <fullName evidence="2">Alkyl hydroperoxide reductase AhpD</fullName>
        <ecNumber evidence="2">1.11.1.28</ecNumber>
    </recommendedName>
    <alternativeName>
        <fullName evidence="2">Alkylhydroperoxidase AhpD</fullName>
    </alternativeName>
</protein>
<comment type="function">
    <text evidence="2">Antioxidant protein with alkyl hydroperoxidase activity. Required for the reduction of the AhpC active site cysteine residues and for the regeneration of the AhpC enzyme activity.</text>
</comment>
<comment type="catalytic activity">
    <reaction evidence="2">
        <text>N(6)-[(R)-dihydrolipoyl]-L-lysyl-[lipoyl-carrier protein] + a hydroperoxide = N(6)-[(R)-lipoyl]-L-lysyl-[lipoyl-carrier protein] + an alcohol + H2O</text>
        <dbReference type="Rhea" id="RHEA:62636"/>
        <dbReference type="Rhea" id="RHEA-COMP:10502"/>
        <dbReference type="Rhea" id="RHEA-COMP:16355"/>
        <dbReference type="ChEBI" id="CHEBI:15377"/>
        <dbReference type="ChEBI" id="CHEBI:30879"/>
        <dbReference type="ChEBI" id="CHEBI:35924"/>
        <dbReference type="ChEBI" id="CHEBI:83099"/>
        <dbReference type="ChEBI" id="CHEBI:83100"/>
        <dbReference type="EC" id="1.11.1.28"/>
    </reaction>
</comment>
<comment type="similarity">
    <text evidence="2">Belongs to the AhpD family.</text>
</comment>
<name>AHPD_AZOC5</name>
<feature type="chain" id="PRO_0000359471" description="Alkyl hydroperoxide reductase AhpD">
    <location>
        <begin position="1"/>
        <end position="181"/>
    </location>
</feature>
<feature type="active site" description="Proton donor" evidence="2">
    <location>
        <position position="131"/>
    </location>
</feature>
<feature type="active site" description="Cysteine sulfenic acid (-SOH) intermediate" evidence="2">
    <location>
        <position position="134"/>
    </location>
</feature>
<feature type="disulfide bond" evidence="1">
    <location>
        <begin position="131"/>
        <end position="134"/>
    </location>
</feature>
<feature type="disulfide bond" description="Interchain (with AhpC); in linked form" evidence="2">
    <location>
        <position position="134"/>
    </location>
</feature>
<sequence length="181" mass="18933">MSIEALKTQLPAFAKDVKLNLSALPREDSLTEQQLYGLLVACGYTTRNGTVAQALEAEAAPHLSPAALDAAKAAASIMAMNNVYYRFTHLASNKAYETLPAKLRMSVIGNPGVDKVDFELWSLAVSAMNGCGRCIDAHEAVLREAGLSEAQIQTAVRVGAIIASAAVALEAAGAGFPEAAE</sequence>
<keyword id="KW-0049">Antioxidant</keyword>
<keyword id="KW-1015">Disulfide bond</keyword>
<keyword id="KW-0560">Oxidoreductase</keyword>
<keyword id="KW-0575">Peroxidase</keyword>
<keyword id="KW-0676">Redox-active center</keyword>
<keyword id="KW-1185">Reference proteome</keyword>
<reference key="1">
    <citation type="submission" date="2007-04" db="EMBL/GenBank/DDBJ databases">
        <title>Complete genome sequence of the nitrogen-fixing bacterium Azorhizobium caulinodans ORS571.</title>
        <authorList>
            <person name="Lee K.B."/>
            <person name="Backer P.D."/>
            <person name="Aono T."/>
            <person name="Liu C.T."/>
            <person name="Suzuki S."/>
            <person name="Suzuki T."/>
            <person name="Kaneko T."/>
            <person name="Yamada M."/>
            <person name="Tabata S."/>
            <person name="Kupfer D.M."/>
            <person name="Najar F.Z."/>
            <person name="Wiley G.B."/>
            <person name="Roe B."/>
            <person name="Binnewies T."/>
            <person name="Ussery D."/>
            <person name="Vereecke D."/>
            <person name="Gevers D."/>
            <person name="Holsters M."/>
            <person name="Oyaizu H."/>
        </authorList>
    </citation>
    <scope>NUCLEOTIDE SEQUENCE [LARGE SCALE GENOMIC DNA]</scope>
    <source>
        <strain>ATCC 43989 / DSM 5975 / JCM 20966 / LMG 6465 / NBRC 14845 / NCIMB 13405 / ORS 571</strain>
    </source>
</reference>